<keyword id="KW-0028">Amino-acid biosynthesis</keyword>
<keyword id="KW-0057">Aromatic amino acid biosynthesis</keyword>
<keyword id="KW-0067">ATP-binding</keyword>
<keyword id="KW-0963">Cytoplasm</keyword>
<keyword id="KW-0418">Kinase</keyword>
<keyword id="KW-0460">Magnesium</keyword>
<keyword id="KW-0479">Metal-binding</keyword>
<keyword id="KW-0547">Nucleotide-binding</keyword>
<keyword id="KW-0808">Transferase</keyword>
<reference key="1">
    <citation type="journal article" date="2004" name="Nat. Genet.">
        <title>Evidence in the Legionella pneumophila genome for exploitation of host cell functions and high genome plasticity.</title>
        <authorList>
            <person name="Cazalet C."/>
            <person name="Rusniok C."/>
            <person name="Brueggemann H."/>
            <person name="Zidane N."/>
            <person name="Magnier A."/>
            <person name="Ma L."/>
            <person name="Tichit M."/>
            <person name="Jarraud S."/>
            <person name="Bouchier C."/>
            <person name="Vandenesch F."/>
            <person name="Kunst F."/>
            <person name="Etienne J."/>
            <person name="Glaser P."/>
            <person name="Buchrieser C."/>
        </authorList>
    </citation>
    <scope>NUCLEOTIDE SEQUENCE [LARGE SCALE GENOMIC DNA]</scope>
    <source>
        <strain>Lens</strain>
    </source>
</reference>
<accession>Q5WXX6</accession>
<dbReference type="EC" id="2.7.1.71" evidence="1"/>
<dbReference type="EMBL" id="CR628337">
    <property type="protein sequence ID" value="CAH15197.1"/>
    <property type="molecule type" value="Genomic_DNA"/>
</dbReference>
<dbReference type="SMR" id="Q5WXX6"/>
<dbReference type="KEGG" id="lpf:lpl0963"/>
<dbReference type="LegioList" id="lpl0963"/>
<dbReference type="HOGENOM" id="CLU_057607_2_2_6"/>
<dbReference type="UniPathway" id="UPA00053">
    <property type="reaction ID" value="UER00088"/>
</dbReference>
<dbReference type="Proteomes" id="UP000002517">
    <property type="component" value="Chromosome"/>
</dbReference>
<dbReference type="GO" id="GO:0005829">
    <property type="term" value="C:cytosol"/>
    <property type="evidence" value="ECO:0007669"/>
    <property type="project" value="TreeGrafter"/>
</dbReference>
<dbReference type="GO" id="GO:0005524">
    <property type="term" value="F:ATP binding"/>
    <property type="evidence" value="ECO:0007669"/>
    <property type="project" value="UniProtKB-UniRule"/>
</dbReference>
<dbReference type="GO" id="GO:0000287">
    <property type="term" value="F:magnesium ion binding"/>
    <property type="evidence" value="ECO:0007669"/>
    <property type="project" value="UniProtKB-UniRule"/>
</dbReference>
<dbReference type="GO" id="GO:0004765">
    <property type="term" value="F:shikimate kinase activity"/>
    <property type="evidence" value="ECO:0007669"/>
    <property type="project" value="UniProtKB-UniRule"/>
</dbReference>
<dbReference type="GO" id="GO:0008652">
    <property type="term" value="P:amino acid biosynthetic process"/>
    <property type="evidence" value="ECO:0007669"/>
    <property type="project" value="UniProtKB-KW"/>
</dbReference>
<dbReference type="GO" id="GO:0009073">
    <property type="term" value="P:aromatic amino acid family biosynthetic process"/>
    <property type="evidence" value="ECO:0007669"/>
    <property type="project" value="UniProtKB-KW"/>
</dbReference>
<dbReference type="GO" id="GO:0009423">
    <property type="term" value="P:chorismate biosynthetic process"/>
    <property type="evidence" value="ECO:0007669"/>
    <property type="project" value="UniProtKB-UniRule"/>
</dbReference>
<dbReference type="CDD" id="cd00464">
    <property type="entry name" value="SK"/>
    <property type="match status" value="1"/>
</dbReference>
<dbReference type="Gene3D" id="3.40.50.300">
    <property type="entry name" value="P-loop containing nucleotide triphosphate hydrolases"/>
    <property type="match status" value="1"/>
</dbReference>
<dbReference type="HAMAP" id="MF_00109">
    <property type="entry name" value="Shikimate_kinase"/>
    <property type="match status" value="1"/>
</dbReference>
<dbReference type="InterPro" id="IPR027417">
    <property type="entry name" value="P-loop_NTPase"/>
</dbReference>
<dbReference type="InterPro" id="IPR031322">
    <property type="entry name" value="Shikimate/glucono_kinase"/>
</dbReference>
<dbReference type="InterPro" id="IPR000623">
    <property type="entry name" value="Shikimate_kinase/TSH1"/>
</dbReference>
<dbReference type="InterPro" id="IPR023000">
    <property type="entry name" value="Shikimate_kinase_CS"/>
</dbReference>
<dbReference type="NCBIfam" id="NF003456">
    <property type="entry name" value="PRK05057.1"/>
    <property type="match status" value="1"/>
</dbReference>
<dbReference type="PANTHER" id="PTHR21087">
    <property type="entry name" value="SHIKIMATE KINASE"/>
    <property type="match status" value="1"/>
</dbReference>
<dbReference type="PANTHER" id="PTHR21087:SF16">
    <property type="entry name" value="SHIKIMATE KINASE 1, CHLOROPLASTIC"/>
    <property type="match status" value="1"/>
</dbReference>
<dbReference type="Pfam" id="PF01202">
    <property type="entry name" value="SKI"/>
    <property type="match status" value="1"/>
</dbReference>
<dbReference type="PRINTS" id="PR01100">
    <property type="entry name" value="SHIKIMTKNASE"/>
</dbReference>
<dbReference type="SUPFAM" id="SSF52540">
    <property type="entry name" value="P-loop containing nucleoside triphosphate hydrolases"/>
    <property type="match status" value="1"/>
</dbReference>
<dbReference type="PROSITE" id="PS01128">
    <property type="entry name" value="SHIKIMATE_KINASE"/>
    <property type="match status" value="1"/>
</dbReference>
<gene>
    <name evidence="1" type="primary">aroK</name>
    <name type="ordered locus">lpl0963</name>
</gene>
<feature type="chain" id="PRO_0000237889" description="Shikimate kinase">
    <location>
        <begin position="1"/>
        <end position="175"/>
    </location>
</feature>
<feature type="binding site" evidence="1">
    <location>
        <begin position="16"/>
        <end position="21"/>
    </location>
    <ligand>
        <name>ATP</name>
        <dbReference type="ChEBI" id="CHEBI:30616"/>
    </ligand>
</feature>
<feature type="binding site" evidence="1">
    <location>
        <position position="20"/>
    </location>
    <ligand>
        <name>Mg(2+)</name>
        <dbReference type="ChEBI" id="CHEBI:18420"/>
    </ligand>
</feature>
<feature type="binding site" evidence="1">
    <location>
        <position position="38"/>
    </location>
    <ligand>
        <name>substrate</name>
    </ligand>
</feature>
<feature type="binding site" evidence="1">
    <location>
        <position position="62"/>
    </location>
    <ligand>
        <name>substrate</name>
    </ligand>
</feature>
<feature type="binding site" evidence="1">
    <location>
        <position position="84"/>
    </location>
    <ligand>
        <name>substrate</name>
    </ligand>
</feature>
<feature type="binding site" evidence="1">
    <location>
        <position position="122"/>
    </location>
    <ligand>
        <name>ATP</name>
        <dbReference type="ChEBI" id="CHEBI:30616"/>
    </ligand>
</feature>
<feature type="binding site" evidence="1">
    <location>
        <position position="141"/>
    </location>
    <ligand>
        <name>substrate</name>
    </ligand>
</feature>
<protein>
    <recommendedName>
        <fullName evidence="1">Shikimate kinase</fullName>
        <shortName evidence="1">SK</shortName>
        <ecNumber evidence="1">2.7.1.71</ecNumber>
    </recommendedName>
</protein>
<sequence length="175" mass="19829">MSIVKVRNIFLIGPMGAGKSTIGRALAKELKLEFYDSDEVIEERAGADISWIFDIEGEEGFRRREQKVIDELTQKTNIVLATGGGVVITPENRNALAGRGTVIYLKTSLQQQFERTKRDTKRPLLQTEDLEGRLESLRDEREPFYDELADVSFETDKLTVKAVANNIIKYLYGEV</sequence>
<comment type="function">
    <text evidence="1">Catalyzes the specific phosphorylation of the 3-hydroxyl group of shikimic acid using ATP as a cosubstrate.</text>
</comment>
<comment type="catalytic activity">
    <reaction evidence="1">
        <text>shikimate + ATP = 3-phosphoshikimate + ADP + H(+)</text>
        <dbReference type="Rhea" id="RHEA:13121"/>
        <dbReference type="ChEBI" id="CHEBI:15378"/>
        <dbReference type="ChEBI" id="CHEBI:30616"/>
        <dbReference type="ChEBI" id="CHEBI:36208"/>
        <dbReference type="ChEBI" id="CHEBI:145989"/>
        <dbReference type="ChEBI" id="CHEBI:456216"/>
        <dbReference type="EC" id="2.7.1.71"/>
    </reaction>
</comment>
<comment type="cofactor">
    <cofactor evidence="1">
        <name>Mg(2+)</name>
        <dbReference type="ChEBI" id="CHEBI:18420"/>
    </cofactor>
    <text evidence="1">Binds 1 Mg(2+) ion per subunit.</text>
</comment>
<comment type="pathway">
    <text evidence="1">Metabolic intermediate biosynthesis; chorismate biosynthesis; chorismate from D-erythrose 4-phosphate and phosphoenolpyruvate: step 5/7.</text>
</comment>
<comment type="subunit">
    <text evidence="1">Monomer.</text>
</comment>
<comment type="subcellular location">
    <subcellularLocation>
        <location evidence="1">Cytoplasm</location>
    </subcellularLocation>
</comment>
<comment type="similarity">
    <text evidence="1">Belongs to the shikimate kinase family.</text>
</comment>
<proteinExistence type="inferred from homology"/>
<organism>
    <name type="scientific">Legionella pneumophila (strain Lens)</name>
    <dbReference type="NCBI Taxonomy" id="297245"/>
    <lineage>
        <taxon>Bacteria</taxon>
        <taxon>Pseudomonadati</taxon>
        <taxon>Pseudomonadota</taxon>
        <taxon>Gammaproteobacteria</taxon>
        <taxon>Legionellales</taxon>
        <taxon>Legionellaceae</taxon>
        <taxon>Legionella</taxon>
    </lineage>
</organism>
<name>AROK_LEGPL</name>
<evidence type="ECO:0000255" key="1">
    <source>
        <dbReference type="HAMAP-Rule" id="MF_00109"/>
    </source>
</evidence>